<name>DNBI_ADE12</name>
<evidence type="ECO:0000256" key="1">
    <source>
        <dbReference type="SAM" id="MobiDB-lite"/>
    </source>
</evidence>
<reference key="1">
    <citation type="journal article" date="1994" name="J. Virol.">
        <title>Nucleotide sequence of human adenovirus type 12 DNA: comparative functional analysis.</title>
        <authorList>
            <person name="Sprengel J."/>
            <person name="Schmitz B."/>
            <person name="Heuss-Neitzel D."/>
            <person name="Zock C."/>
            <person name="Doerfler W."/>
        </authorList>
    </citation>
    <scope>NUCLEOTIDE SEQUENCE [LARGE SCALE GENOMIC DNA]</scope>
</reference>
<organismHost>
    <name type="scientific">Homo sapiens</name>
    <name type="common">Human</name>
    <dbReference type="NCBI Taxonomy" id="9606"/>
</organismHost>
<proteinExistence type="predicted"/>
<organism>
    <name type="scientific">Human adenovirus A serotype 12</name>
    <name type="common">HAdV-12</name>
    <name type="synonym">Human adenovirus 12</name>
    <dbReference type="NCBI Taxonomy" id="28282"/>
    <lineage>
        <taxon>Viruses</taxon>
        <taxon>Varidnaviria</taxon>
        <taxon>Bamfordvirae</taxon>
        <taxon>Preplasmiviricota</taxon>
        <taxon>Tectiliviricetes</taxon>
        <taxon>Rowavirales</taxon>
        <taxon>Adenoviridae</taxon>
        <taxon>Mastadenovirus</taxon>
        <taxon>Human mastadenovirus A</taxon>
    </lineage>
</organism>
<protein>
    <recommendedName>
        <fullName>Probable DNA-binding protein</fullName>
    </recommendedName>
    <alternativeName>
        <fullName>Agnoprotein</fullName>
    </alternativeName>
</protein>
<sequence length="205" mass="22780">MFDKIVIPRQFHHQHKWDKLLSKCPHPGVGFYIIGNKKALSARMRTDWEKVDLLPPVGRMAVDVMKVEISSADRAFMLMFVKACAVFASLHGLYLLNEVYLAASHQKADGKINTTWQLPFVLFLFCCIATTVWILESENGEGDGAPRPACPDFSTRGAETGNQGVQPGAVHGISQREKHVRGDSAQVDFAQAGKSRLEVQVILNF</sequence>
<accession>P36704</accession>
<keyword id="KW-0238">DNA-binding</keyword>
<keyword id="KW-1185">Reference proteome</keyword>
<feature type="chain" id="PRO_0000221689" description="Probable DNA-binding protein">
    <location>
        <begin position="1"/>
        <end position="205"/>
    </location>
</feature>
<feature type="region of interest" description="Disordered" evidence="1">
    <location>
        <begin position="140"/>
        <end position="168"/>
    </location>
</feature>
<dbReference type="EMBL" id="X73487">
    <property type="protein sequence ID" value="CAA51883.1"/>
    <property type="molecule type" value="Genomic_DNA"/>
</dbReference>
<dbReference type="PIR" id="S33934">
    <property type="entry name" value="S33934"/>
</dbReference>
<dbReference type="Proteomes" id="UP000004993">
    <property type="component" value="Genome"/>
</dbReference>
<dbReference type="GO" id="GO:0003677">
    <property type="term" value="F:DNA binding"/>
    <property type="evidence" value="ECO:0007669"/>
    <property type="project" value="UniProtKB-KW"/>
</dbReference>
<dbReference type="InterPro" id="IPR004292">
    <property type="entry name" value="L1-like"/>
</dbReference>
<dbReference type="Pfam" id="PF03052">
    <property type="entry name" value="Adeno_52K"/>
    <property type="match status" value="1"/>
</dbReference>